<evidence type="ECO:0000255" key="1">
    <source>
        <dbReference type="HAMAP-Rule" id="MF_00524"/>
    </source>
</evidence>
<keyword id="KW-0067">ATP-binding</keyword>
<keyword id="KW-0963">Cytoplasm</keyword>
<keyword id="KW-0324">Glycolysis</keyword>
<keyword id="KW-0418">Kinase</keyword>
<keyword id="KW-0547">Nucleotide-binding</keyword>
<keyword id="KW-0808">Transferase</keyword>
<dbReference type="EC" id="2.7.1.2" evidence="1"/>
<dbReference type="EMBL" id="CP001138">
    <property type="protein sequence ID" value="ACH51955.1"/>
    <property type="molecule type" value="Genomic_DNA"/>
</dbReference>
<dbReference type="RefSeq" id="WP_000170380.1">
    <property type="nucleotide sequence ID" value="NC_011149.1"/>
</dbReference>
<dbReference type="SMR" id="B5F0D6"/>
<dbReference type="KEGG" id="sea:SeAg_B2546"/>
<dbReference type="HOGENOM" id="CLU_042582_1_0_6"/>
<dbReference type="Proteomes" id="UP000008819">
    <property type="component" value="Chromosome"/>
</dbReference>
<dbReference type="GO" id="GO:0005829">
    <property type="term" value="C:cytosol"/>
    <property type="evidence" value="ECO:0007669"/>
    <property type="project" value="TreeGrafter"/>
</dbReference>
<dbReference type="GO" id="GO:0005524">
    <property type="term" value="F:ATP binding"/>
    <property type="evidence" value="ECO:0007669"/>
    <property type="project" value="UniProtKB-UniRule"/>
</dbReference>
<dbReference type="GO" id="GO:0005536">
    <property type="term" value="F:D-glucose binding"/>
    <property type="evidence" value="ECO:0007669"/>
    <property type="project" value="InterPro"/>
</dbReference>
<dbReference type="GO" id="GO:0004340">
    <property type="term" value="F:glucokinase activity"/>
    <property type="evidence" value="ECO:0007669"/>
    <property type="project" value="UniProtKB-UniRule"/>
</dbReference>
<dbReference type="GO" id="GO:0006096">
    <property type="term" value="P:glycolytic process"/>
    <property type="evidence" value="ECO:0007669"/>
    <property type="project" value="UniProtKB-UniRule"/>
</dbReference>
<dbReference type="CDD" id="cd24008">
    <property type="entry name" value="ASKHA_NBD_GLK"/>
    <property type="match status" value="1"/>
</dbReference>
<dbReference type="FunFam" id="3.30.420.40:FF:000045">
    <property type="entry name" value="Glucokinase"/>
    <property type="match status" value="1"/>
</dbReference>
<dbReference type="FunFam" id="3.40.367.20:FF:000002">
    <property type="entry name" value="Glucokinase"/>
    <property type="match status" value="1"/>
</dbReference>
<dbReference type="Gene3D" id="3.30.420.40">
    <property type="match status" value="1"/>
</dbReference>
<dbReference type="Gene3D" id="3.40.367.20">
    <property type="match status" value="1"/>
</dbReference>
<dbReference type="HAMAP" id="MF_00524">
    <property type="entry name" value="Glucokinase"/>
    <property type="match status" value="1"/>
</dbReference>
<dbReference type="InterPro" id="IPR043129">
    <property type="entry name" value="ATPase_NBD"/>
</dbReference>
<dbReference type="InterPro" id="IPR050201">
    <property type="entry name" value="Bacterial_glucokinase"/>
</dbReference>
<dbReference type="InterPro" id="IPR003836">
    <property type="entry name" value="Glucokinase"/>
</dbReference>
<dbReference type="NCBIfam" id="TIGR00749">
    <property type="entry name" value="glk"/>
    <property type="match status" value="1"/>
</dbReference>
<dbReference type="NCBIfam" id="NF001414">
    <property type="entry name" value="PRK00292.1-1"/>
    <property type="match status" value="1"/>
</dbReference>
<dbReference type="NCBIfam" id="NF001416">
    <property type="entry name" value="PRK00292.1-3"/>
    <property type="match status" value="1"/>
</dbReference>
<dbReference type="PANTHER" id="PTHR47690">
    <property type="entry name" value="GLUCOKINASE"/>
    <property type="match status" value="1"/>
</dbReference>
<dbReference type="PANTHER" id="PTHR47690:SF1">
    <property type="entry name" value="GLUCOKINASE"/>
    <property type="match status" value="1"/>
</dbReference>
<dbReference type="Pfam" id="PF02685">
    <property type="entry name" value="Glucokinase"/>
    <property type="match status" value="1"/>
</dbReference>
<dbReference type="SUPFAM" id="SSF53067">
    <property type="entry name" value="Actin-like ATPase domain"/>
    <property type="match status" value="1"/>
</dbReference>
<organism>
    <name type="scientific">Salmonella agona (strain SL483)</name>
    <dbReference type="NCBI Taxonomy" id="454166"/>
    <lineage>
        <taxon>Bacteria</taxon>
        <taxon>Pseudomonadati</taxon>
        <taxon>Pseudomonadota</taxon>
        <taxon>Gammaproteobacteria</taxon>
        <taxon>Enterobacterales</taxon>
        <taxon>Enterobacteriaceae</taxon>
        <taxon>Salmonella</taxon>
    </lineage>
</organism>
<gene>
    <name evidence="1" type="primary">glk</name>
    <name type="ordered locus">SeAg_B2546</name>
</gene>
<name>GLK_SALA4</name>
<sequence length="321" mass="34595">MTKYALVGDVGGTNARLALCDIASGEISQAKTYSGLDYPSLEAVVRVYLDEHSVSVEDGCIAIACPITGDWVAMTNHTWAFSIAEMKKNLGFSHLEIINDFTAVSMAIPMLKKEHLIQFGGGEPVDGKPIAVYGAGTGLGVAHLVHVDKRWISLPGEGGHVDFAPNSEEEAMILEILRAEIGHVSAERVLSGPGLVNLYRAIVKSDNRLPENLRPKDITERALADSCIDCRRALSLFCVIMGRFGGDLALTMGTFGGVYIAGGIVPRFLEFFKASGFRGGFEDKGRFKDYVHGIPVYLIVHDNPGLLGSGAHLRQTLGHIL</sequence>
<accession>B5F0D6</accession>
<comment type="catalytic activity">
    <reaction evidence="1">
        <text>D-glucose + ATP = D-glucose 6-phosphate + ADP + H(+)</text>
        <dbReference type="Rhea" id="RHEA:17825"/>
        <dbReference type="ChEBI" id="CHEBI:4167"/>
        <dbReference type="ChEBI" id="CHEBI:15378"/>
        <dbReference type="ChEBI" id="CHEBI:30616"/>
        <dbReference type="ChEBI" id="CHEBI:61548"/>
        <dbReference type="ChEBI" id="CHEBI:456216"/>
        <dbReference type="EC" id="2.7.1.2"/>
    </reaction>
</comment>
<comment type="subcellular location">
    <subcellularLocation>
        <location evidence="1">Cytoplasm</location>
    </subcellularLocation>
</comment>
<comment type="similarity">
    <text evidence="1">Belongs to the bacterial glucokinase family.</text>
</comment>
<reference key="1">
    <citation type="journal article" date="2011" name="J. Bacteriol.">
        <title>Comparative genomics of 28 Salmonella enterica isolates: evidence for CRISPR-mediated adaptive sublineage evolution.</title>
        <authorList>
            <person name="Fricke W.F."/>
            <person name="Mammel M.K."/>
            <person name="McDermott P.F."/>
            <person name="Tartera C."/>
            <person name="White D.G."/>
            <person name="Leclerc J.E."/>
            <person name="Ravel J."/>
            <person name="Cebula T.A."/>
        </authorList>
    </citation>
    <scope>NUCLEOTIDE SEQUENCE [LARGE SCALE GENOMIC DNA]</scope>
    <source>
        <strain>SL483</strain>
    </source>
</reference>
<feature type="chain" id="PRO_1000127717" description="Glucokinase">
    <location>
        <begin position="1"/>
        <end position="321"/>
    </location>
</feature>
<feature type="binding site" evidence="1">
    <location>
        <begin position="8"/>
        <end position="13"/>
    </location>
    <ligand>
        <name>ATP</name>
        <dbReference type="ChEBI" id="CHEBI:30616"/>
    </ligand>
</feature>
<protein>
    <recommendedName>
        <fullName evidence="1">Glucokinase</fullName>
        <ecNumber evidence="1">2.7.1.2</ecNumber>
    </recommendedName>
    <alternativeName>
        <fullName evidence="1">Glucose kinase</fullName>
    </alternativeName>
</protein>
<proteinExistence type="inferred from homology"/>